<name>NTPP_PROMT</name>
<keyword id="KW-0963">Cytoplasm</keyword>
<keyword id="KW-0378">Hydrolase</keyword>
<keyword id="KW-0546">Nucleotide metabolism</keyword>
<keyword id="KW-1185">Reference proteome</keyword>
<evidence type="ECO:0000255" key="1">
    <source>
        <dbReference type="HAMAP-Rule" id="MF_00528"/>
    </source>
</evidence>
<dbReference type="EC" id="3.6.1.9" evidence="1"/>
<dbReference type="EMBL" id="CP000095">
    <property type="protein sequence ID" value="AAZ58260.1"/>
    <property type="molecule type" value="Genomic_DNA"/>
</dbReference>
<dbReference type="RefSeq" id="WP_011294857.1">
    <property type="nucleotide sequence ID" value="NC_007335.2"/>
</dbReference>
<dbReference type="SMR" id="Q46JR8"/>
<dbReference type="STRING" id="59920.PMN2A_0769"/>
<dbReference type="KEGG" id="pmn:PMN2A_0769"/>
<dbReference type="HOGENOM" id="CLU_040416_1_2_3"/>
<dbReference type="OrthoDB" id="9807767at2"/>
<dbReference type="PhylomeDB" id="Q46JR8"/>
<dbReference type="Proteomes" id="UP000002535">
    <property type="component" value="Chromosome"/>
</dbReference>
<dbReference type="GO" id="GO:0005737">
    <property type="term" value="C:cytoplasm"/>
    <property type="evidence" value="ECO:0007669"/>
    <property type="project" value="UniProtKB-SubCell"/>
</dbReference>
<dbReference type="GO" id="GO:0047429">
    <property type="term" value="F:nucleoside triphosphate diphosphatase activity"/>
    <property type="evidence" value="ECO:0007669"/>
    <property type="project" value="UniProtKB-EC"/>
</dbReference>
<dbReference type="GO" id="GO:0009117">
    <property type="term" value="P:nucleotide metabolic process"/>
    <property type="evidence" value="ECO:0007669"/>
    <property type="project" value="UniProtKB-KW"/>
</dbReference>
<dbReference type="CDD" id="cd00555">
    <property type="entry name" value="Maf"/>
    <property type="match status" value="1"/>
</dbReference>
<dbReference type="Gene3D" id="3.90.950.10">
    <property type="match status" value="1"/>
</dbReference>
<dbReference type="HAMAP" id="MF_00528">
    <property type="entry name" value="Maf"/>
    <property type="match status" value="1"/>
</dbReference>
<dbReference type="InterPro" id="IPR029001">
    <property type="entry name" value="ITPase-like_fam"/>
</dbReference>
<dbReference type="InterPro" id="IPR003697">
    <property type="entry name" value="Maf-like"/>
</dbReference>
<dbReference type="NCBIfam" id="TIGR00172">
    <property type="entry name" value="maf"/>
    <property type="match status" value="1"/>
</dbReference>
<dbReference type="PANTHER" id="PTHR43213">
    <property type="entry name" value="BIFUNCTIONAL DTTP/UTP PYROPHOSPHATASE/METHYLTRANSFERASE PROTEIN-RELATED"/>
    <property type="match status" value="1"/>
</dbReference>
<dbReference type="PANTHER" id="PTHR43213:SF5">
    <property type="entry name" value="BIFUNCTIONAL DTTP_UTP PYROPHOSPHATASE_METHYLTRANSFERASE PROTEIN-RELATED"/>
    <property type="match status" value="1"/>
</dbReference>
<dbReference type="Pfam" id="PF02545">
    <property type="entry name" value="Maf"/>
    <property type="match status" value="1"/>
</dbReference>
<dbReference type="PIRSF" id="PIRSF006305">
    <property type="entry name" value="Maf"/>
    <property type="match status" value="1"/>
</dbReference>
<dbReference type="SUPFAM" id="SSF52972">
    <property type="entry name" value="ITPase-like"/>
    <property type="match status" value="1"/>
</dbReference>
<gene>
    <name type="ordered locus">PMN2A_0769</name>
</gene>
<comment type="function">
    <text evidence="1">Nucleoside triphosphate pyrophosphatase. May have a dual role in cell division arrest and in preventing the incorporation of modified nucleotides into cellular nucleic acids.</text>
</comment>
<comment type="catalytic activity">
    <reaction evidence="1">
        <text>a ribonucleoside 5'-triphosphate + H2O = a ribonucleoside 5'-phosphate + diphosphate + H(+)</text>
        <dbReference type="Rhea" id="RHEA:23996"/>
        <dbReference type="ChEBI" id="CHEBI:15377"/>
        <dbReference type="ChEBI" id="CHEBI:15378"/>
        <dbReference type="ChEBI" id="CHEBI:33019"/>
        <dbReference type="ChEBI" id="CHEBI:58043"/>
        <dbReference type="ChEBI" id="CHEBI:61557"/>
        <dbReference type="EC" id="3.6.1.9"/>
    </reaction>
</comment>
<comment type="catalytic activity">
    <reaction evidence="1">
        <text>a 2'-deoxyribonucleoside 5'-triphosphate + H2O = a 2'-deoxyribonucleoside 5'-phosphate + diphosphate + H(+)</text>
        <dbReference type="Rhea" id="RHEA:44644"/>
        <dbReference type="ChEBI" id="CHEBI:15377"/>
        <dbReference type="ChEBI" id="CHEBI:15378"/>
        <dbReference type="ChEBI" id="CHEBI:33019"/>
        <dbReference type="ChEBI" id="CHEBI:61560"/>
        <dbReference type="ChEBI" id="CHEBI:65317"/>
        <dbReference type="EC" id="3.6.1.9"/>
    </reaction>
</comment>
<comment type="cofactor">
    <cofactor evidence="1">
        <name>a divalent metal cation</name>
        <dbReference type="ChEBI" id="CHEBI:60240"/>
    </cofactor>
</comment>
<comment type="subcellular location">
    <subcellularLocation>
        <location evidence="1">Cytoplasm</location>
    </subcellularLocation>
</comment>
<comment type="similarity">
    <text evidence="1">Belongs to the Maf family.</text>
</comment>
<proteinExistence type="inferred from homology"/>
<feature type="chain" id="PRO_0000267371" description="Nucleoside triphosphate pyrophosphatase">
    <location>
        <begin position="1"/>
        <end position="211"/>
    </location>
</feature>
<feature type="active site" description="Proton acceptor" evidence="1">
    <location>
        <position position="75"/>
    </location>
</feature>
<reference key="1">
    <citation type="journal article" date="2007" name="PLoS Genet.">
        <title>Patterns and implications of gene gain and loss in the evolution of Prochlorococcus.</title>
        <authorList>
            <person name="Kettler G.C."/>
            <person name="Martiny A.C."/>
            <person name="Huang K."/>
            <person name="Zucker J."/>
            <person name="Coleman M.L."/>
            <person name="Rodrigue S."/>
            <person name="Chen F."/>
            <person name="Lapidus A."/>
            <person name="Ferriera S."/>
            <person name="Johnson J."/>
            <person name="Steglich C."/>
            <person name="Church G.M."/>
            <person name="Richardson P."/>
            <person name="Chisholm S.W."/>
        </authorList>
    </citation>
    <scope>NUCLEOTIDE SEQUENCE [LARGE SCALE GENOMIC DNA]</scope>
    <source>
        <strain>NATL2A</strain>
    </source>
</reference>
<accession>Q46JR8</accession>
<sequence length="211" mass="23588">MFVLASASKARQKLLDQIALRHKVIVSDFDETQLQEPDPILKVKLLAKAKADSALKKLIEENHALNTYQALLGCDSLFEFKGEIFEKPIDKEQLISRWQRMSGQSGFLHTGHCLISLDNSKSDRESISQNNSCDGVVSTRIEFMNLSNFEINKYASTSEPYNCAGGFAIEGNGGLFIKKIDGCFSNVIGLSLPWLKNNLEKFGLSRLLLDR</sequence>
<protein>
    <recommendedName>
        <fullName evidence="1">Nucleoside triphosphate pyrophosphatase</fullName>
        <ecNumber evidence="1">3.6.1.9</ecNumber>
    </recommendedName>
    <alternativeName>
        <fullName evidence="1">Nucleotide pyrophosphatase</fullName>
        <shortName evidence="1">Nucleotide PPase</shortName>
    </alternativeName>
</protein>
<organism>
    <name type="scientific">Prochlorococcus marinus (strain NATL2A)</name>
    <dbReference type="NCBI Taxonomy" id="59920"/>
    <lineage>
        <taxon>Bacteria</taxon>
        <taxon>Bacillati</taxon>
        <taxon>Cyanobacteriota</taxon>
        <taxon>Cyanophyceae</taxon>
        <taxon>Synechococcales</taxon>
        <taxon>Prochlorococcaceae</taxon>
        <taxon>Prochlorococcus</taxon>
    </lineage>
</organism>